<name>MRAZ_PSET1</name>
<sequence length="152" mass="17647">MFRGASSLSLDDKGRFAVPTKYRDDLLSEDQGTVICTVALNEPCLWLYPLAQWQEIESRLAKISNMNPRARRMQRMLLGNATEYQLDKNGRILLAPSLRAHADLGKKIMLVGLMNKFEIWDEARWHQQMRQDTELERLGDFEPHPDLDNFTL</sequence>
<feature type="chain" id="PRO_0000230099" description="Transcriptional regulator MraZ">
    <location>
        <begin position="1"/>
        <end position="152"/>
    </location>
</feature>
<feature type="domain" description="SpoVT-AbrB 1" evidence="2">
    <location>
        <begin position="5"/>
        <end position="52"/>
    </location>
</feature>
<feature type="domain" description="SpoVT-AbrB 2" evidence="2">
    <location>
        <begin position="81"/>
        <end position="124"/>
    </location>
</feature>
<protein>
    <recommendedName>
        <fullName>Transcriptional regulator MraZ</fullName>
    </recommendedName>
</protein>
<organism>
    <name type="scientific">Pseudoalteromonas translucida (strain TAC 125)</name>
    <dbReference type="NCBI Taxonomy" id="326442"/>
    <lineage>
        <taxon>Bacteria</taxon>
        <taxon>Pseudomonadati</taxon>
        <taxon>Pseudomonadota</taxon>
        <taxon>Gammaproteobacteria</taxon>
        <taxon>Alteromonadales</taxon>
        <taxon>Pseudoalteromonadaceae</taxon>
        <taxon>Pseudoalteromonas</taxon>
    </lineage>
</organism>
<gene>
    <name evidence="1" type="primary">mraZ</name>
    <name type="ordered locus">PSHAa2513</name>
</gene>
<evidence type="ECO:0000255" key="1">
    <source>
        <dbReference type="HAMAP-Rule" id="MF_01008"/>
    </source>
</evidence>
<evidence type="ECO:0000255" key="2">
    <source>
        <dbReference type="PROSITE-ProRule" id="PRU01076"/>
    </source>
</evidence>
<proteinExistence type="inferred from homology"/>
<comment type="subunit">
    <text evidence="1">Forms oligomers.</text>
</comment>
<comment type="subcellular location">
    <subcellularLocation>
        <location evidence="1">Cytoplasm</location>
        <location evidence="1">Nucleoid</location>
    </subcellularLocation>
</comment>
<comment type="similarity">
    <text evidence="1">Belongs to the MraZ family.</text>
</comment>
<accession>Q3IFZ5</accession>
<keyword id="KW-0963">Cytoplasm</keyword>
<keyword id="KW-0238">DNA-binding</keyword>
<keyword id="KW-1185">Reference proteome</keyword>
<keyword id="KW-0677">Repeat</keyword>
<keyword id="KW-0804">Transcription</keyword>
<keyword id="KW-0805">Transcription regulation</keyword>
<reference key="1">
    <citation type="journal article" date="2005" name="Genome Res.">
        <title>Coping with cold: the genome of the versatile marine Antarctica bacterium Pseudoalteromonas haloplanktis TAC125.</title>
        <authorList>
            <person name="Medigue C."/>
            <person name="Krin E."/>
            <person name="Pascal G."/>
            <person name="Barbe V."/>
            <person name="Bernsel A."/>
            <person name="Bertin P.N."/>
            <person name="Cheung F."/>
            <person name="Cruveiller S."/>
            <person name="D'Amico S."/>
            <person name="Duilio A."/>
            <person name="Fang G."/>
            <person name="Feller G."/>
            <person name="Ho C."/>
            <person name="Mangenot S."/>
            <person name="Marino G."/>
            <person name="Nilsson J."/>
            <person name="Parrilli E."/>
            <person name="Rocha E.P.C."/>
            <person name="Rouy Z."/>
            <person name="Sekowska A."/>
            <person name="Tutino M.L."/>
            <person name="Vallenet D."/>
            <person name="von Heijne G."/>
            <person name="Danchin A."/>
        </authorList>
    </citation>
    <scope>NUCLEOTIDE SEQUENCE [LARGE SCALE GENOMIC DNA]</scope>
    <source>
        <strain>TAC 125</strain>
    </source>
</reference>
<dbReference type="EMBL" id="CR954246">
    <property type="protein sequence ID" value="CAI87561.1"/>
    <property type="molecule type" value="Genomic_DNA"/>
</dbReference>
<dbReference type="SMR" id="Q3IFZ5"/>
<dbReference type="STRING" id="326442.PSHAa2513"/>
<dbReference type="KEGG" id="pha:PSHAa2513"/>
<dbReference type="eggNOG" id="COG2001">
    <property type="taxonomic scope" value="Bacteria"/>
</dbReference>
<dbReference type="HOGENOM" id="CLU_107907_2_0_6"/>
<dbReference type="BioCyc" id="PHAL326442:PSHA_RS12375-MONOMER"/>
<dbReference type="Proteomes" id="UP000006843">
    <property type="component" value="Chromosome I"/>
</dbReference>
<dbReference type="GO" id="GO:0005737">
    <property type="term" value="C:cytoplasm"/>
    <property type="evidence" value="ECO:0007669"/>
    <property type="project" value="UniProtKB-UniRule"/>
</dbReference>
<dbReference type="GO" id="GO:0009295">
    <property type="term" value="C:nucleoid"/>
    <property type="evidence" value="ECO:0007669"/>
    <property type="project" value="UniProtKB-SubCell"/>
</dbReference>
<dbReference type="GO" id="GO:0003700">
    <property type="term" value="F:DNA-binding transcription factor activity"/>
    <property type="evidence" value="ECO:0007669"/>
    <property type="project" value="UniProtKB-UniRule"/>
</dbReference>
<dbReference type="GO" id="GO:0000976">
    <property type="term" value="F:transcription cis-regulatory region binding"/>
    <property type="evidence" value="ECO:0007669"/>
    <property type="project" value="TreeGrafter"/>
</dbReference>
<dbReference type="GO" id="GO:2000143">
    <property type="term" value="P:negative regulation of DNA-templated transcription initiation"/>
    <property type="evidence" value="ECO:0007669"/>
    <property type="project" value="TreeGrafter"/>
</dbReference>
<dbReference type="CDD" id="cd16321">
    <property type="entry name" value="MraZ_C"/>
    <property type="match status" value="1"/>
</dbReference>
<dbReference type="CDD" id="cd16320">
    <property type="entry name" value="MraZ_N"/>
    <property type="match status" value="1"/>
</dbReference>
<dbReference type="Gene3D" id="3.40.1550.20">
    <property type="entry name" value="Transcriptional regulator MraZ domain"/>
    <property type="match status" value="1"/>
</dbReference>
<dbReference type="HAMAP" id="MF_01008">
    <property type="entry name" value="MraZ"/>
    <property type="match status" value="1"/>
</dbReference>
<dbReference type="InterPro" id="IPR003444">
    <property type="entry name" value="MraZ"/>
</dbReference>
<dbReference type="InterPro" id="IPR035644">
    <property type="entry name" value="MraZ_C"/>
</dbReference>
<dbReference type="InterPro" id="IPR020603">
    <property type="entry name" value="MraZ_dom"/>
</dbReference>
<dbReference type="InterPro" id="IPR035642">
    <property type="entry name" value="MraZ_N"/>
</dbReference>
<dbReference type="InterPro" id="IPR038619">
    <property type="entry name" value="MraZ_sf"/>
</dbReference>
<dbReference type="InterPro" id="IPR007159">
    <property type="entry name" value="SpoVT-AbrB_dom"/>
</dbReference>
<dbReference type="InterPro" id="IPR037914">
    <property type="entry name" value="SpoVT-AbrB_sf"/>
</dbReference>
<dbReference type="NCBIfam" id="TIGR00242">
    <property type="entry name" value="division/cell wall cluster transcriptional repressor MraZ"/>
    <property type="match status" value="1"/>
</dbReference>
<dbReference type="PANTHER" id="PTHR34701">
    <property type="entry name" value="TRANSCRIPTIONAL REGULATOR MRAZ"/>
    <property type="match status" value="1"/>
</dbReference>
<dbReference type="PANTHER" id="PTHR34701:SF1">
    <property type="entry name" value="TRANSCRIPTIONAL REGULATOR MRAZ"/>
    <property type="match status" value="1"/>
</dbReference>
<dbReference type="Pfam" id="PF02381">
    <property type="entry name" value="MraZ"/>
    <property type="match status" value="2"/>
</dbReference>
<dbReference type="SUPFAM" id="SSF89447">
    <property type="entry name" value="AbrB/MazE/MraZ-like"/>
    <property type="match status" value="1"/>
</dbReference>
<dbReference type="PROSITE" id="PS51740">
    <property type="entry name" value="SPOVT_ABRB"/>
    <property type="match status" value="2"/>
</dbReference>